<feature type="chain" id="PRO_0000323056" description="Small ribosomal subunit protein uS5">
    <location>
        <begin position="1"/>
        <end position="166"/>
    </location>
</feature>
<feature type="domain" description="S5 DRBM" evidence="1">
    <location>
        <begin position="11"/>
        <end position="74"/>
    </location>
</feature>
<protein>
    <recommendedName>
        <fullName evidence="1">Small ribosomal subunit protein uS5</fullName>
    </recommendedName>
    <alternativeName>
        <fullName evidence="2">30S ribosomal protein S5</fullName>
    </alternativeName>
</protein>
<gene>
    <name evidence="1" type="primary">rpsE</name>
    <name type="ordered locus">AHA_0326</name>
</gene>
<accession>A0KF38</accession>
<proteinExistence type="inferred from homology"/>
<evidence type="ECO:0000255" key="1">
    <source>
        <dbReference type="HAMAP-Rule" id="MF_01307"/>
    </source>
</evidence>
<evidence type="ECO:0000305" key="2"/>
<dbReference type="EMBL" id="CP000462">
    <property type="protein sequence ID" value="ABK39378.1"/>
    <property type="molecule type" value="Genomic_DNA"/>
</dbReference>
<dbReference type="RefSeq" id="WP_011704318.1">
    <property type="nucleotide sequence ID" value="NC_008570.1"/>
</dbReference>
<dbReference type="RefSeq" id="YP_854860.1">
    <property type="nucleotide sequence ID" value="NC_008570.1"/>
</dbReference>
<dbReference type="SMR" id="A0KF38"/>
<dbReference type="STRING" id="380703.AHA_0326"/>
<dbReference type="EnsemblBacteria" id="ABK39378">
    <property type="protein sequence ID" value="ABK39378"/>
    <property type="gene ID" value="AHA_0326"/>
</dbReference>
<dbReference type="GeneID" id="4489531"/>
<dbReference type="KEGG" id="aha:AHA_0326"/>
<dbReference type="PATRIC" id="fig|380703.7.peg.315"/>
<dbReference type="eggNOG" id="COG0098">
    <property type="taxonomic scope" value="Bacteria"/>
</dbReference>
<dbReference type="HOGENOM" id="CLU_065898_2_2_6"/>
<dbReference type="OrthoDB" id="9809045at2"/>
<dbReference type="Proteomes" id="UP000000756">
    <property type="component" value="Chromosome"/>
</dbReference>
<dbReference type="GO" id="GO:0015935">
    <property type="term" value="C:small ribosomal subunit"/>
    <property type="evidence" value="ECO:0007669"/>
    <property type="project" value="InterPro"/>
</dbReference>
<dbReference type="GO" id="GO:0019843">
    <property type="term" value="F:rRNA binding"/>
    <property type="evidence" value="ECO:0007669"/>
    <property type="project" value="UniProtKB-UniRule"/>
</dbReference>
<dbReference type="GO" id="GO:0003735">
    <property type="term" value="F:structural constituent of ribosome"/>
    <property type="evidence" value="ECO:0007669"/>
    <property type="project" value="InterPro"/>
</dbReference>
<dbReference type="GO" id="GO:0006412">
    <property type="term" value="P:translation"/>
    <property type="evidence" value="ECO:0007669"/>
    <property type="project" value="UniProtKB-UniRule"/>
</dbReference>
<dbReference type="FunFam" id="3.30.160.20:FF:000001">
    <property type="entry name" value="30S ribosomal protein S5"/>
    <property type="match status" value="1"/>
</dbReference>
<dbReference type="FunFam" id="3.30.230.10:FF:000002">
    <property type="entry name" value="30S ribosomal protein S5"/>
    <property type="match status" value="1"/>
</dbReference>
<dbReference type="Gene3D" id="3.30.160.20">
    <property type="match status" value="1"/>
</dbReference>
<dbReference type="Gene3D" id="3.30.230.10">
    <property type="match status" value="1"/>
</dbReference>
<dbReference type="HAMAP" id="MF_01307_B">
    <property type="entry name" value="Ribosomal_uS5_B"/>
    <property type="match status" value="1"/>
</dbReference>
<dbReference type="InterPro" id="IPR020568">
    <property type="entry name" value="Ribosomal_Su5_D2-typ_SF"/>
</dbReference>
<dbReference type="InterPro" id="IPR000851">
    <property type="entry name" value="Ribosomal_uS5"/>
</dbReference>
<dbReference type="InterPro" id="IPR005712">
    <property type="entry name" value="Ribosomal_uS5_bac-type"/>
</dbReference>
<dbReference type="InterPro" id="IPR005324">
    <property type="entry name" value="Ribosomal_uS5_C"/>
</dbReference>
<dbReference type="InterPro" id="IPR013810">
    <property type="entry name" value="Ribosomal_uS5_N"/>
</dbReference>
<dbReference type="InterPro" id="IPR018192">
    <property type="entry name" value="Ribosomal_uS5_N_CS"/>
</dbReference>
<dbReference type="InterPro" id="IPR014721">
    <property type="entry name" value="Ribsml_uS5_D2-typ_fold_subgr"/>
</dbReference>
<dbReference type="NCBIfam" id="TIGR01021">
    <property type="entry name" value="rpsE_bact"/>
    <property type="match status" value="1"/>
</dbReference>
<dbReference type="PANTHER" id="PTHR48277">
    <property type="entry name" value="MITOCHONDRIAL RIBOSOMAL PROTEIN S5"/>
    <property type="match status" value="1"/>
</dbReference>
<dbReference type="PANTHER" id="PTHR48277:SF1">
    <property type="entry name" value="MITOCHONDRIAL RIBOSOMAL PROTEIN S5"/>
    <property type="match status" value="1"/>
</dbReference>
<dbReference type="Pfam" id="PF00333">
    <property type="entry name" value="Ribosomal_S5"/>
    <property type="match status" value="1"/>
</dbReference>
<dbReference type="Pfam" id="PF03719">
    <property type="entry name" value="Ribosomal_S5_C"/>
    <property type="match status" value="1"/>
</dbReference>
<dbReference type="SUPFAM" id="SSF54768">
    <property type="entry name" value="dsRNA-binding domain-like"/>
    <property type="match status" value="1"/>
</dbReference>
<dbReference type="SUPFAM" id="SSF54211">
    <property type="entry name" value="Ribosomal protein S5 domain 2-like"/>
    <property type="match status" value="1"/>
</dbReference>
<dbReference type="PROSITE" id="PS00585">
    <property type="entry name" value="RIBOSOMAL_S5"/>
    <property type="match status" value="1"/>
</dbReference>
<dbReference type="PROSITE" id="PS50881">
    <property type="entry name" value="S5_DSRBD"/>
    <property type="match status" value="1"/>
</dbReference>
<organism>
    <name type="scientific">Aeromonas hydrophila subsp. hydrophila (strain ATCC 7966 / DSM 30187 / BCRC 13018 / CCUG 14551 / JCM 1027 / KCTC 2358 / NCIMB 9240 / NCTC 8049)</name>
    <dbReference type="NCBI Taxonomy" id="380703"/>
    <lineage>
        <taxon>Bacteria</taxon>
        <taxon>Pseudomonadati</taxon>
        <taxon>Pseudomonadota</taxon>
        <taxon>Gammaproteobacteria</taxon>
        <taxon>Aeromonadales</taxon>
        <taxon>Aeromonadaceae</taxon>
        <taxon>Aeromonas</taxon>
    </lineage>
</organism>
<keyword id="KW-1185">Reference proteome</keyword>
<keyword id="KW-0687">Ribonucleoprotein</keyword>
<keyword id="KW-0689">Ribosomal protein</keyword>
<keyword id="KW-0694">RNA-binding</keyword>
<keyword id="KW-0699">rRNA-binding</keyword>
<comment type="function">
    <text evidence="1">With S4 and S12 plays an important role in translational accuracy.</text>
</comment>
<comment type="function">
    <text evidence="1">Located at the back of the 30S subunit body where it stabilizes the conformation of the head with respect to the body.</text>
</comment>
<comment type="subunit">
    <text evidence="1">Part of the 30S ribosomal subunit. Contacts proteins S4 and S8.</text>
</comment>
<comment type="domain">
    <text>The N-terminal domain interacts with the head of the 30S subunit; the C-terminal domain interacts with the body and contacts protein S4. The interaction surface between S4 and S5 is involved in control of translational fidelity.</text>
</comment>
<comment type="similarity">
    <text evidence="1">Belongs to the universal ribosomal protein uS5 family.</text>
</comment>
<reference key="1">
    <citation type="journal article" date="2006" name="J. Bacteriol.">
        <title>Genome sequence of Aeromonas hydrophila ATCC 7966T: jack of all trades.</title>
        <authorList>
            <person name="Seshadri R."/>
            <person name="Joseph S.W."/>
            <person name="Chopra A.K."/>
            <person name="Sha J."/>
            <person name="Shaw J."/>
            <person name="Graf J."/>
            <person name="Haft D.H."/>
            <person name="Wu M."/>
            <person name="Ren Q."/>
            <person name="Rosovitz M.J."/>
            <person name="Madupu R."/>
            <person name="Tallon L."/>
            <person name="Kim M."/>
            <person name="Jin S."/>
            <person name="Vuong H."/>
            <person name="Stine O.C."/>
            <person name="Ali A."/>
            <person name="Horneman A.J."/>
            <person name="Heidelberg J.F."/>
        </authorList>
    </citation>
    <scope>NUCLEOTIDE SEQUENCE [LARGE SCALE GENOMIC DNA]</scope>
    <source>
        <strain>ATCC 7966 / DSM 30187 / BCRC 13018 / CCUG 14551 / JCM 1027 / KCTC 2358 / NCIMB 9240 / NCTC 8049</strain>
    </source>
</reference>
<name>RS5_AERHH</name>
<sequence>MAKVESQAGELQEKLIAVNRVSKTVKGGRIMSFTALTVVGDGNGRVGYGYGKAREVPAAIQKAMEQAKRNLNKVELNNGTLHHPVRGVHSGSTVFMKPASQGTGIIAGGAMRAVLEVAGIHNVLAKTYGSTNPINVVRATVDALVQGQSPAQIAAKRGLRVEEILG</sequence>